<keyword id="KW-0687">Ribonucleoprotein</keyword>
<keyword id="KW-0689">Ribosomal protein</keyword>
<gene>
    <name evidence="1" type="primary">rpmA</name>
    <name type="ordered locus">SPAB_04120</name>
</gene>
<evidence type="ECO:0000255" key="1">
    <source>
        <dbReference type="HAMAP-Rule" id="MF_00539"/>
    </source>
</evidence>
<evidence type="ECO:0000256" key="2">
    <source>
        <dbReference type="SAM" id="MobiDB-lite"/>
    </source>
</evidence>
<evidence type="ECO:0000305" key="3"/>
<proteinExistence type="inferred from homology"/>
<feature type="chain" id="PRO_1000081908" description="Large ribosomal subunit protein bL27">
    <location>
        <begin position="1"/>
        <end position="85"/>
    </location>
</feature>
<feature type="region of interest" description="Disordered" evidence="2">
    <location>
        <begin position="1"/>
        <end position="20"/>
    </location>
</feature>
<comment type="similarity">
    <text evidence="1">Belongs to the bacterial ribosomal protein bL27 family.</text>
</comment>
<reference key="1">
    <citation type="submission" date="2007-11" db="EMBL/GenBank/DDBJ databases">
        <authorList>
            <consortium name="The Salmonella enterica serovar Paratyphi B Genome Sequencing Project"/>
            <person name="McClelland M."/>
            <person name="Sanderson E.K."/>
            <person name="Porwollik S."/>
            <person name="Spieth J."/>
            <person name="Clifton W.S."/>
            <person name="Fulton R."/>
            <person name="Cordes M."/>
            <person name="Wollam A."/>
            <person name="Shah N."/>
            <person name="Pepin K."/>
            <person name="Bhonagiri V."/>
            <person name="Nash W."/>
            <person name="Johnson M."/>
            <person name="Thiruvilangam P."/>
            <person name="Wilson R."/>
        </authorList>
    </citation>
    <scope>NUCLEOTIDE SEQUENCE [LARGE SCALE GENOMIC DNA]</scope>
    <source>
        <strain>ATCC BAA-1250 / SPB7</strain>
    </source>
</reference>
<organism>
    <name type="scientific">Salmonella paratyphi B (strain ATCC BAA-1250 / SPB7)</name>
    <dbReference type="NCBI Taxonomy" id="1016998"/>
    <lineage>
        <taxon>Bacteria</taxon>
        <taxon>Pseudomonadati</taxon>
        <taxon>Pseudomonadota</taxon>
        <taxon>Gammaproteobacteria</taxon>
        <taxon>Enterobacterales</taxon>
        <taxon>Enterobacteriaceae</taxon>
        <taxon>Salmonella</taxon>
    </lineage>
</organism>
<name>RL27_SALPB</name>
<accession>A9N752</accession>
<protein>
    <recommendedName>
        <fullName evidence="1">Large ribosomal subunit protein bL27</fullName>
    </recommendedName>
    <alternativeName>
        <fullName evidence="3">50S ribosomal protein L27</fullName>
    </alternativeName>
</protein>
<dbReference type="EMBL" id="CP000886">
    <property type="protein sequence ID" value="ABX69444.1"/>
    <property type="molecule type" value="Genomic_DNA"/>
</dbReference>
<dbReference type="RefSeq" id="WP_000940593.1">
    <property type="nucleotide sequence ID" value="NC_010102.1"/>
</dbReference>
<dbReference type="SMR" id="A9N752"/>
<dbReference type="GeneID" id="66757642"/>
<dbReference type="KEGG" id="spq:SPAB_04120"/>
<dbReference type="PATRIC" id="fig|1016998.12.peg.3880"/>
<dbReference type="HOGENOM" id="CLU_095424_4_1_6"/>
<dbReference type="BioCyc" id="SENT1016998:SPAB_RS16740-MONOMER"/>
<dbReference type="Proteomes" id="UP000008556">
    <property type="component" value="Chromosome"/>
</dbReference>
<dbReference type="GO" id="GO:0022625">
    <property type="term" value="C:cytosolic large ribosomal subunit"/>
    <property type="evidence" value="ECO:0007669"/>
    <property type="project" value="TreeGrafter"/>
</dbReference>
<dbReference type="GO" id="GO:0003735">
    <property type="term" value="F:structural constituent of ribosome"/>
    <property type="evidence" value="ECO:0007669"/>
    <property type="project" value="InterPro"/>
</dbReference>
<dbReference type="GO" id="GO:0006412">
    <property type="term" value="P:translation"/>
    <property type="evidence" value="ECO:0007669"/>
    <property type="project" value="UniProtKB-UniRule"/>
</dbReference>
<dbReference type="FunFam" id="2.40.50.100:FF:000001">
    <property type="entry name" value="50S ribosomal protein L27"/>
    <property type="match status" value="1"/>
</dbReference>
<dbReference type="Gene3D" id="2.40.50.100">
    <property type="match status" value="1"/>
</dbReference>
<dbReference type="HAMAP" id="MF_00539">
    <property type="entry name" value="Ribosomal_bL27"/>
    <property type="match status" value="1"/>
</dbReference>
<dbReference type="InterPro" id="IPR001684">
    <property type="entry name" value="Ribosomal_bL27"/>
</dbReference>
<dbReference type="InterPro" id="IPR018261">
    <property type="entry name" value="Ribosomal_bL27_CS"/>
</dbReference>
<dbReference type="NCBIfam" id="TIGR00062">
    <property type="entry name" value="L27"/>
    <property type="match status" value="1"/>
</dbReference>
<dbReference type="PANTHER" id="PTHR15893:SF0">
    <property type="entry name" value="LARGE RIBOSOMAL SUBUNIT PROTEIN BL27M"/>
    <property type="match status" value="1"/>
</dbReference>
<dbReference type="PANTHER" id="PTHR15893">
    <property type="entry name" value="RIBOSOMAL PROTEIN L27"/>
    <property type="match status" value="1"/>
</dbReference>
<dbReference type="Pfam" id="PF01016">
    <property type="entry name" value="Ribosomal_L27"/>
    <property type="match status" value="1"/>
</dbReference>
<dbReference type="PRINTS" id="PR00063">
    <property type="entry name" value="RIBOSOMALL27"/>
</dbReference>
<dbReference type="SUPFAM" id="SSF110324">
    <property type="entry name" value="Ribosomal L27 protein-like"/>
    <property type="match status" value="1"/>
</dbReference>
<dbReference type="PROSITE" id="PS00831">
    <property type="entry name" value="RIBOSOMAL_L27"/>
    <property type="match status" value="1"/>
</dbReference>
<sequence length="85" mass="9125">MAHKKAGGSTRNGRDSEAKRLGVKRFGGEAVLAGSIIVRQRGTKFHAGTNVGCGRDHTLFAKADGKVKFEVKGPKNRKYISIVAE</sequence>